<name>CH10_STRP4</name>
<keyword id="KW-0143">Chaperone</keyword>
<keyword id="KW-0963">Cytoplasm</keyword>
<dbReference type="EMBL" id="CP001015">
    <property type="protein sequence ID" value="ACF55309.1"/>
    <property type="molecule type" value="Genomic_DNA"/>
</dbReference>
<dbReference type="KEGG" id="spx:SPG_1819"/>
<dbReference type="HOGENOM" id="CLU_132825_1_2_9"/>
<dbReference type="GO" id="GO:0005737">
    <property type="term" value="C:cytoplasm"/>
    <property type="evidence" value="ECO:0007669"/>
    <property type="project" value="UniProtKB-SubCell"/>
</dbReference>
<dbReference type="GO" id="GO:0005524">
    <property type="term" value="F:ATP binding"/>
    <property type="evidence" value="ECO:0007669"/>
    <property type="project" value="InterPro"/>
</dbReference>
<dbReference type="GO" id="GO:0046872">
    <property type="term" value="F:metal ion binding"/>
    <property type="evidence" value="ECO:0007669"/>
    <property type="project" value="TreeGrafter"/>
</dbReference>
<dbReference type="GO" id="GO:0044183">
    <property type="term" value="F:protein folding chaperone"/>
    <property type="evidence" value="ECO:0007669"/>
    <property type="project" value="InterPro"/>
</dbReference>
<dbReference type="GO" id="GO:0051087">
    <property type="term" value="F:protein-folding chaperone binding"/>
    <property type="evidence" value="ECO:0007669"/>
    <property type="project" value="TreeGrafter"/>
</dbReference>
<dbReference type="GO" id="GO:0051082">
    <property type="term" value="F:unfolded protein binding"/>
    <property type="evidence" value="ECO:0007669"/>
    <property type="project" value="TreeGrafter"/>
</dbReference>
<dbReference type="GO" id="GO:0051085">
    <property type="term" value="P:chaperone cofactor-dependent protein refolding"/>
    <property type="evidence" value="ECO:0007669"/>
    <property type="project" value="TreeGrafter"/>
</dbReference>
<dbReference type="CDD" id="cd00320">
    <property type="entry name" value="cpn10"/>
    <property type="match status" value="1"/>
</dbReference>
<dbReference type="FunFam" id="2.30.33.40:FF:000007">
    <property type="entry name" value="10 kDa chaperonin"/>
    <property type="match status" value="1"/>
</dbReference>
<dbReference type="Gene3D" id="2.30.33.40">
    <property type="entry name" value="GroES chaperonin"/>
    <property type="match status" value="1"/>
</dbReference>
<dbReference type="HAMAP" id="MF_00580">
    <property type="entry name" value="CH10"/>
    <property type="match status" value="1"/>
</dbReference>
<dbReference type="InterPro" id="IPR020818">
    <property type="entry name" value="Chaperonin_GroES"/>
</dbReference>
<dbReference type="InterPro" id="IPR037124">
    <property type="entry name" value="Chaperonin_GroES_sf"/>
</dbReference>
<dbReference type="InterPro" id="IPR011032">
    <property type="entry name" value="GroES-like_sf"/>
</dbReference>
<dbReference type="NCBIfam" id="NF001528">
    <property type="entry name" value="PRK00364.1-4"/>
    <property type="match status" value="1"/>
</dbReference>
<dbReference type="PANTHER" id="PTHR10772">
    <property type="entry name" value="10 KDA HEAT SHOCK PROTEIN"/>
    <property type="match status" value="1"/>
</dbReference>
<dbReference type="PANTHER" id="PTHR10772:SF58">
    <property type="entry name" value="CO-CHAPERONIN GROES"/>
    <property type="match status" value="1"/>
</dbReference>
<dbReference type="Pfam" id="PF00166">
    <property type="entry name" value="Cpn10"/>
    <property type="match status" value="1"/>
</dbReference>
<dbReference type="PRINTS" id="PR00297">
    <property type="entry name" value="CHAPERONIN10"/>
</dbReference>
<dbReference type="SMART" id="SM00883">
    <property type="entry name" value="Cpn10"/>
    <property type="match status" value="1"/>
</dbReference>
<dbReference type="SUPFAM" id="SSF50129">
    <property type="entry name" value="GroES-like"/>
    <property type="match status" value="1"/>
</dbReference>
<gene>
    <name evidence="1" type="primary">groES</name>
    <name evidence="1" type="synonym">groS</name>
    <name type="ordered locus">SPG_1819</name>
</gene>
<proteinExistence type="inferred from homology"/>
<feature type="chain" id="PRO_1000129712" description="Co-chaperonin GroES">
    <location>
        <begin position="1"/>
        <end position="94"/>
    </location>
</feature>
<reference key="1">
    <citation type="journal article" date="2001" name="Microb. Drug Resist.">
        <title>Annotated draft genomic sequence from a Streptococcus pneumoniae type 19F clinical isolate.</title>
        <authorList>
            <person name="Dopazo J."/>
            <person name="Mendoza A."/>
            <person name="Herrero J."/>
            <person name="Caldara F."/>
            <person name="Humbert Y."/>
            <person name="Friedli L."/>
            <person name="Guerrier M."/>
            <person name="Grand-Schenk E."/>
            <person name="Gandin C."/>
            <person name="de Francesco M."/>
            <person name="Polissi A."/>
            <person name="Buell G."/>
            <person name="Feger G."/>
            <person name="Garcia E."/>
            <person name="Peitsch M."/>
            <person name="Garcia-Bustos J.F."/>
        </authorList>
    </citation>
    <scope>NUCLEOTIDE SEQUENCE [LARGE SCALE GENOMIC DNA]</scope>
    <source>
        <strain>G54</strain>
    </source>
</reference>
<reference key="2">
    <citation type="submission" date="2008-03" db="EMBL/GenBank/DDBJ databases">
        <title>Pneumococcal beta glucoside metabolism investigated by whole genome comparison.</title>
        <authorList>
            <person name="Mulas L."/>
            <person name="Trappetti C."/>
            <person name="Hakenbeck R."/>
            <person name="Iannelli F."/>
            <person name="Pozzi G."/>
            <person name="Davidsen T.M."/>
            <person name="Tettelin H."/>
            <person name="Oggioni M."/>
        </authorList>
    </citation>
    <scope>NUCLEOTIDE SEQUENCE [LARGE SCALE GENOMIC DNA]</scope>
    <source>
        <strain>G54</strain>
    </source>
</reference>
<sequence length="94" mass="9911">MLKPXGDRVVLKIEEKEQTVGGFVLAGSAQEKTKTAQVVATGQGVRTLNGDLVAPSVKTGDRVLVEAHAGLDVKDGDEKYIIVGEANILAIIEE</sequence>
<evidence type="ECO:0000255" key="1">
    <source>
        <dbReference type="HAMAP-Rule" id="MF_00580"/>
    </source>
</evidence>
<accession>B5E224</accession>
<organism>
    <name type="scientific">Streptococcus pneumoniae serotype 19F (strain G54)</name>
    <dbReference type="NCBI Taxonomy" id="512566"/>
    <lineage>
        <taxon>Bacteria</taxon>
        <taxon>Bacillati</taxon>
        <taxon>Bacillota</taxon>
        <taxon>Bacilli</taxon>
        <taxon>Lactobacillales</taxon>
        <taxon>Streptococcaceae</taxon>
        <taxon>Streptococcus</taxon>
    </lineage>
</organism>
<comment type="function">
    <text evidence="1">Together with the chaperonin GroEL, plays an essential role in assisting protein folding. The GroEL-GroES system forms a nano-cage that allows encapsulation of the non-native substrate proteins and provides a physical environment optimized to promote and accelerate protein folding. GroES binds to the apical surface of the GroEL ring, thereby capping the opening of the GroEL channel.</text>
</comment>
<comment type="subunit">
    <text evidence="1">Heptamer of 7 subunits arranged in a ring. Interacts with the chaperonin GroEL.</text>
</comment>
<comment type="subcellular location">
    <subcellularLocation>
        <location evidence="1">Cytoplasm</location>
    </subcellularLocation>
</comment>
<comment type="similarity">
    <text evidence="1">Belongs to the GroES chaperonin family.</text>
</comment>
<protein>
    <recommendedName>
        <fullName evidence="1">Co-chaperonin GroES</fullName>
    </recommendedName>
    <alternativeName>
        <fullName evidence="1">10 kDa chaperonin</fullName>
    </alternativeName>
    <alternativeName>
        <fullName evidence="1">Chaperonin-10</fullName>
        <shortName evidence="1">Cpn10</shortName>
    </alternativeName>
</protein>